<sequence>MAIQHRDPRGGGGSRDARTNRRIKAREVRVIGAEGEQLGVLPIDQALARAQELGMDLVEVSPMAKPPVCKIMDYGRFKYLEKKKQNEAKKKQVVVQLKEVKLRPRTEEHDYDTKIKKVREFLAEANKARITVMFRGREMSHRELGQKVLQRVIEDLRDVAVIESAPRMEGRQMFMILAPNPKMLQSQRDKAKAAAAAAPAAAPAAPAAGAPAPAPAPAAPAPAPAAADPAAQR</sequence>
<proteinExistence type="inferred from homology"/>
<dbReference type="EMBL" id="CP000251">
    <property type="protein sequence ID" value="ABC81746.1"/>
    <property type="molecule type" value="Genomic_DNA"/>
</dbReference>
<dbReference type="RefSeq" id="WP_011421028.1">
    <property type="nucleotide sequence ID" value="NC_007760.1"/>
</dbReference>
<dbReference type="SMR" id="Q2IJB8"/>
<dbReference type="STRING" id="290397.Adeh_1975"/>
<dbReference type="KEGG" id="ade:Adeh_1975"/>
<dbReference type="eggNOG" id="COG0290">
    <property type="taxonomic scope" value="Bacteria"/>
</dbReference>
<dbReference type="HOGENOM" id="CLU_054919_0_3_7"/>
<dbReference type="OrthoDB" id="9806014at2"/>
<dbReference type="Proteomes" id="UP000001935">
    <property type="component" value="Chromosome"/>
</dbReference>
<dbReference type="GO" id="GO:0005829">
    <property type="term" value="C:cytosol"/>
    <property type="evidence" value="ECO:0007669"/>
    <property type="project" value="TreeGrafter"/>
</dbReference>
<dbReference type="GO" id="GO:0016020">
    <property type="term" value="C:membrane"/>
    <property type="evidence" value="ECO:0007669"/>
    <property type="project" value="TreeGrafter"/>
</dbReference>
<dbReference type="GO" id="GO:0043022">
    <property type="term" value="F:ribosome binding"/>
    <property type="evidence" value="ECO:0007669"/>
    <property type="project" value="TreeGrafter"/>
</dbReference>
<dbReference type="GO" id="GO:0003743">
    <property type="term" value="F:translation initiation factor activity"/>
    <property type="evidence" value="ECO:0007669"/>
    <property type="project" value="UniProtKB-UniRule"/>
</dbReference>
<dbReference type="GO" id="GO:0032790">
    <property type="term" value="P:ribosome disassembly"/>
    <property type="evidence" value="ECO:0007669"/>
    <property type="project" value="TreeGrafter"/>
</dbReference>
<dbReference type="FunFam" id="3.10.20.80:FF:000001">
    <property type="entry name" value="Translation initiation factor IF-3"/>
    <property type="match status" value="1"/>
</dbReference>
<dbReference type="FunFam" id="3.30.110.10:FF:000001">
    <property type="entry name" value="Translation initiation factor IF-3"/>
    <property type="match status" value="1"/>
</dbReference>
<dbReference type="Gene3D" id="3.30.110.10">
    <property type="entry name" value="Translation initiation factor 3 (IF-3), C-terminal domain"/>
    <property type="match status" value="1"/>
</dbReference>
<dbReference type="Gene3D" id="3.10.20.80">
    <property type="entry name" value="Translation initiation factor 3 (IF-3), N-terminal domain"/>
    <property type="match status" value="1"/>
</dbReference>
<dbReference type="HAMAP" id="MF_00080">
    <property type="entry name" value="IF_3"/>
    <property type="match status" value="1"/>
</dbReference>
<dbReference type="InterPro" id="IPR036788">
    <property type="entry name" value="T_IF-3_C_sf"/>
</dbReference>
<dbReference type="InterPro" id="IPR036787">
    <property type="entry name" value="T_IF-3_N_sf"/>
</dbReference>
<dbReference type="InterPro" id="IPR001288">
    <property type="entry name" value="Translation_initiation_fac_3"/>
</dbReference>
<dbReference type="InterPro" id="IPR019815">
    <property type="entry name" value="Translation_initiation_fac_3_C"/>
</dbReference>
<dbReference type="InterPro" id="IPR019814">
    <property type="entry name" value="Translation_initiation_fac_3_N"/>
</dbReference>
<dbReference type="NCBIfam" id="TIGR00168">
    <property type="entry name" value="infC"/>
    <property type="match status" value="1"/>
</dbReference>
<dbReference type="PANTHER" id="PTHR10938">
    <property type="entry name" value="TRANSLATION INITIATION FACTOR IF-3"/>
    <property type="match status" value="1"/>
</dbReference>
<dbReference type="PANTHER" id="PTHR10938:SF0">
    <property type="entry name" value="TRANSLATION INITIATION FACTOR IF-3, MITOCHONDRIAL"/>
    <property type="match status" value="1"/>
</dbReference>
<dbReference type="Pfam" id="PF00707">
    <property type="entry name" value="IF3_C"/>
    <property type="match status" value="1"/>
</dbReference>
<dbReference type="Pfam" id="PF05198">
    <property type="entry name" value="IF3_N"/>
    <property type="match status" value="1"/>
</dbReference>
<dbReference type="SUPFAM" id="SSF55200">
    <property type="entry name" value="Translation initiation factor IF3, C-terminal domain"/>
    <property type="match status" value="1"/>
</dbReference>
<dbReference type="SUPFAM" id="SSF54364">
    <property type="entry name" value="Translation initiation factor IF3, N-terminal domain"/>
    <property type="match status" value="1"/>
</dbReference>
<gene>
    <name evidence="1" type="primary">infC</name>
    <name type="ordered locus">Adeh_1975</name>
</gene>
<evidence type="ECO:0000255" key="1">
    <source>
        <dbReference type="HAMAP-Rule" id="MF_00080"/>
    </source>
</evidence>
<evidence type="ECO:0000256" key="2">
    <source>
        <dbReference type="SAM" id="MobiDB-lite"/>
    </source>
</evidence>
<reference key="1">
    <citation type="submission" date="2006-01" db="EMBL/GenBank/DDBJ databases">
        <title>Complete sequence of Anaeromyxobacter dehalogenans 2CP-C.</title>
        <authorList>
            <person name="Copeland A."/>
            <person name="Lucas S."/>
            <person name="Lapidus A."/>
            <person name="Barry K."/>
            <person name="Detter J.C."/>
            <person name="Glavina T."/>
            <person name="Hammon N."/>
            <person name="Israni S."/>
            <person name="Pitluck S."/>
            <person name="Brettin T."/>
            <person name="Bruce D."/>
            <person name="Han C."/>
            <person name="Tapia R."/>
            <person name="Gilna P."/>
            <person name="Kiss H."/>
            <person name="Schmutz J."/>
            <person name="Larimer F."/>
            <person name="Land M."/>
            <person name="Kyrpides N."/>
            <person name="Anderson I."/>
            <person name="Sanford R.A."/>
            <person name="Ritalahti K.M."/>
            <person name="Thomas H.S."/>
            <person name="Kirby J.R."/>
            <person name="Zhulin I.B."/>
            <person name="Loeffler F.E."/>
            <person name="Richardson P."/>
        </authorList>
    </citation>
    <scope>NUCLEOTIDE SEQUENCE [LARGE SCALE GENOMIC DNA]</scope>
    <source>
        <strain>2CP-C</strain>
    </source>
</reference>
<protein>
    <recommendedName>
        <fullName evidence="1">Translation initiation factor IF-3</fullName>
    </recommendedName>
</protein>
<organism>
    <name type="scientific">Anaeromyxobacter dehalogenans (strain 2CP-C)</name>
    <dbReference type="NCBI Taxonomy" id="290397"/>
    <lineage>
        <taxon>Bacteria</taxon>
        <taxon>Pseudomonadati</taxon>
        <taxon>Myxococcota</taxon>
        <taxon>Myxococcia</taxon>
        <taxon>Myxococcales</taxon>
        <taxon>Cystobacterineae</taxon>
        <taxon>Anaeromyxobacteraceae</taxon>
        <taxon>Anaeromyxobacter</taxon>
    </lineage>
</organism>
<feature type="chain" id="PRO_1000004523" description="Translation initiation factor IF-3">
    <location>
        <begin position="1"/>
        <end position="233"/>
    </location>
</feature>
<feature type="region of interest" description="Disordered" evidence="2">
    <location>
        <begin position="1"/>
        <end position="21"/>
    </location>
</feature>
<feature type="region of interest" description="Disordered" evidence="2">
    <location>
        <begin position="184"/>
        <end position="233"/>
    </location>
</feature>
<feature type="compositionally biased region" description="Low complexity" evidence="2">
    <location>
        <begin position="193"/>
        <end position="211"/>
    </location>
</feature>
<feature type="compositionally biased region" description="Pro residues" evidence="2">
    <location>
        <begin position="212"/>
        <end position="223"/>
    </location>
</feature>
<feature type="compositionally biased region" description="Low complexity" evidence="2">
    <location>
        <begin position="224"/>
        <end position="233"/>
    </location>
</feature>
<keyword id="KW-0963">Cytoplasm</keyword>
<keyword id="KW-0396">Initiation factor</keyword>
<keyword id="KW-0648">Protein biosynthesis</keyword>
<keyword id="KW-1185">Reference proteome</keyword>
<comment type="function">
    <text evidence="1">IF-3 binds to the 30S ribosomal subunit and shifts the equilibrium between 70S ribosomes and their 50S and 30S subunits in favor of the free subunits, thus enhancing the availability of 30S subunits on which protein synthesis initiation begins.</text>
</comment>
<comment type="subunit">
    <text evidence="1">Monomer.</text>
</comment>
<comment type="subcellular location">
    <subcellularLocation>
        <location evidence="1">Cytoplasm</location>
    </subcellularLocation>
</comment>
<comment type="similarity">
    <text evidence="1">Belongs to the IF-3 family.</text>
</comment>
<accession>Q2IJB8</accession>
<name>IF3_ANADE</name>